<keyword id="KW-0539">Nucleus</keyword>
<keyword id="KW-1185">Reference proteome</keyword>
<keyword id="KW-0677">Repeat</keyword>
<keyword id="KW-0690">Ribosome biogenesis</keyword>
<keyword id="KW-0698">rRNA processing</keyword>
<keyword id="KW-0853">WD repeat</keyword>
<gene>
    <name type="ORF">LinJ11.0410</name>
    <name type="ORF">LinJ_11_0410</name>
</gene>
<feature type="chain" id="PRO_0000370411" description="Ribosome biogenesis protein BOP1 homolog">
    <location>
        <begin position="1"/>
        <end position="808"/>
    </location>
</feature>
<feature type="repeat" description="WD 1">
    <location>
        <begin position="430"/>
        <end position="469"/>
    </location>
</feature>
<feature type="repeat" description="WD 2">
    <location>
        <begin position="640"/>
        <end position="680"/>
    </location>
</feature>
<feature type="repeat" description="WD 3">
    <location>
        <begin position="682"/>
        <end position="720"/>
    </location>
</feature>
<feature type="repeat" description="WD 4">
    <location>
        <begin position="724"/>
        <end position="766"/>
    </location>
</feature>
<feature type="repeat" description="WD 5">
    <location>
        <begin position="777"/>
        <end position="808"/>
    </location>
</feature>
<feature type="region of interest" description="Disordered" evidence="2">
    <location>
        <begin position="1"/>
        <end position="56"/>
    </location>
</feature>
<feature type="compositionally biased region" description="Low complexity" evidence="2">
    <location>
        <begin position="12"/>
        <end position="24"/>
    </location>
</feature>
<feature type="compositionally biased region" description="Low complexity" evidence="2">
    <location>
        <begin position="33"/>
        <end position="50"/>
    </location>
</feature>
<dbReference type="EMBL" id="FR796443">
    <property type="protein sequence ID" value="CAM66213.1"/>
    <property type="molecule type" value="Genomic_DNA"/>
</dbReference>
<dbReference type="RefSeq" id="XP_001463843.1">
    <property type="nucleotide sequence ID" value="XM_001463806.1"/>
</dbReference>
<dbReference type="SMR" id="A4HUV2"/>
<dbReference type="FunCoup" id="A4HUV2">
    <property type="interactions" value="290"/>
</dbReference>
<dbReference type="STRING" id="5671.A4HUV2"/>
<dbReference type="GeneID" id="5067219"/>
<dbReference type="KEGG" id="lif:LINJ_11_0410"/>
<dbReference type="VEuPathDB" id="TriTrypDB:LINF_110009000"/>
<dbReference type="eggNOG" id="KOG0650">
    <property type="taxonomic scope" value="Eukaryota"/>
</dbReference>
<dbReference type="InParanoid" id="A4HUV2"/>
<dbReference type="OMA" id="MRPAKGE"/>
<dbReference type="Proteomes" id="UP000008153">
    <property type="component" value="Chromosome 11"/>
</dbReference>
<dbReference type="GO" id="GO:0005654">
    <property type="term" value="C:nucleoplasm"/>
    <property type="evidence" value="ECO:0007669"/>
    <property type="project" value="UniProtKB-SubCell"/>
</dbReference>
<dbReference type="GO" id="GO:0070545">
    <property type="term" value="C:PeBoW complex"/>
    <property type="evidence" value="ECO:0007669"/>
    <property type="project" value="TreeGrafter"/>
</dbReference>
<dbReference type="GO" id="GO:0030687">
    <property type="term" value="C:preribosome, large subunit precursor"/>
    <property type="evidence" value="ECO:0007669"/>
    <property type="project" value="UniProtKB-UniRule"/>
</dbReference>
<dbReference type="GO" id="GO:0043021">
    <property type="term" value="F:ribonucleoprotein complex binding"/>
    <property type="evidence" value="ECO:0007669"/>
    <property type="project" value="UniProtKB-UniRule"/>
</dbReference>
<dbReference type="GO" id="GO:0000466">
    <property type="term" value="P:maturation of 5.8S rRNA from tricistronic rRNA transcript (SSU-rRNA, 5.8S rRNA, LSU-rRNA)"/>
    <property type="evidence" value="ECO:0007669"/>
    <property type="project" value="UniProtKB-UniRule"/>
</dbReference>
<dbReference type="GO" id="GO:0000463">
    <property type="term" value="P:maturation of LSU-rRNA from tricistronic rRNA transcript (SSU-rRNA, 5.8S rRNA, LSU-rRNA)"/>
    <property type="evidence" value="ECO:0007669"/>
    <property type="project" value="UniProtKB-UniRule"/>
</dbReference>
<dbReference type="Gene3D" id="2.130.10.10">
    <property type="entry name" value="YVTN repeat-like/Quinoprotein amine dehydrogenase"/>
    <property type="match status" value="1"/>
</dbReference>
<dbReference type="HAMAP" id="MF_03027">
    <property type="entry name" value="BOP1"/>
    <property type="match status" value="1"/>
</dbReference>
<dbReference type="InterPro" id="IPR028598">
    <property type="entry name" value="BOP1/Erb1"/>
</dbReference>
<dbReference type="InterPro" id="IPR012953">
    <property type="entry name" value="BOP1_N_dom"/>
</dbReference>
<dbReference type="InterPro" id="IPR015943">
    <property type="entry name" value="WD40/YVTN_repeat-like_dom_sf"/>
</dbReference>
<dbReference type="InterPro" id="IPR036322">
    <property type="entry name" value="WD40_repeat_dom_sf"/>
</dbReference>
<dbReference type="InterPro" id="IPR001680">
    <property type="entry name" value="WD40_rpt"/>
</dbReference>
<dbReference type="PANTHER" id="PTHR17605:SF0">
    <property type="entry name" value="RIBOSOME BIOGENESIS PROTEIN BOP1"/>
    <property type="match status" value="1"/>
</dbReference>
<dbReference type="PANTHER" id="PTHR17605">
    <property type="entry name" value="RIBOSOME BIOGENESIS PROTEIN BOP1 BLOCK OF PROLIFERATION 1 PROTEIN"/>
    <property type="match status" value="1"/>
</dbReference>
<dbReference type="Pfam" id="PF08145">
    <property type="entry name" value="BOP1NT"/>
    <property type="match status" value="1"/>
</dbReference>
<dbReference type="Pfam" id="PF00400">
    <property type="entry name" value="WD40"/>
    <property type="match status" value="3"/>
</dbReference>
<dbReference type="SMART" id="SM01035">
    <property type="entry name" value="BOP1NT"/>
    <property type="match status" value="1"/>
</dbReference>
<dbReference type="SMART" id="SM00320">
    <property type="entry name" value="WD40"/>
    <property type="match status" value="5"/>
</dbReference>
<dbReference type="SUPFAM" id="SSF50978">
    <property type="entry name" value="WD40 repeat-like"/>
    <property type="match status" value="1"/>
</dbReference>
<dbReference type="PROSITE" id="PS50082">
    <property type="entry name" value="WD_REPEATS_2"/>
    <property type="match status" value="2"/>
</dbReference>
<dbReference type="PROSITE" id="PS50294">
    <property type="entry name" value="WD_REPEATS_REGION"/>
    <property type="match status" value="2"/>
</dbReference>
<reference key="1">
    <citation type="journal article" date="2007" name="Nat. Genet.">
        <title>Comparative genomic analysis of three Leishmania species that cause diverse human disease.</title>
        <authorList>
            <person name="Peacock C.S."/>
            <person name="Seeger K."/>
            <person name="Harris D."/>
            <person name="Murphy L."/>
            <person name="Ruiz J.C."/>
            <person name="Quail M.A."/>
            <person name="Peters N."/>
            <person name="Adlem E."/>
            <person name="Tivey A."/>
            <person name="Aslett M."/>
            <person name="Kerhornou A."/>
            <person name="Ivens A."/>
            <person name="Fraser A."/>
            <person name="Rajandream M.-A."/>
            <person name="Carver T."/>
            <person name="Norbertczak H."/>
            <person name="Chillingworth T."/>
            <person name="Hance Z."/>
            <person name="Jagels K."/>
            <person name="Moule S."/>
            <person name="Ormond D."/>
            <person name="Rutter S."/>
            <person name="Sqaures R."/>
            <person name="Whitehead S."/>
            <person name="Rabbinowitsch E."/>
            <person name="Arrowsmith C."/>
            <person name="White B."/>
            <person name="Thurston S."/>
            <person name="Bringaud F."/>
            <person name="Baldauf S.L."/>
            <person name="Faulconbridge A."/>
            <person name="Jeffares D."/>
            <person name="Depledge D.P."/>
            <person name="Oyola S.O."/>
            <person name="Hilley J.D."/>
            <person name="Brito L.O."/>
            <person name="Tosi L.R.O."/>
            <person name="Barrell B."/>
            <person name="Cruz A.K."/>
            <person name="Mottram J.C."/>
            <person name="Smith D.F."/>
            <person name="Berriman M."/>
        </authorList>
    </citation>
    <scope>NUCLEOTIDE SEQUENCE [LARGE SCALE GENOMIC DNA]</scope>
    <source>
        <strain>JPCM5</strain>
    </source>
</reference>
<organism>
    <name type="scientific">Leishmania infantum</name>
    <dbReference type="NCBI Taxonomy" id="5671"/>
    <lineage>
        <taxon>Eukaryota</taxon>
        <taxon>Discoba</taxon>
        <taxon>Euglenozoa</taxon>
        <taxon>Kinetoplastea</taxon>
        <taxon>Metakinetoplastina</taxon>
        <taxon>Trypanosomatida</taxon>
        <taxon>Trypanosomatidae</taxon>
        <taxon>Leishmaniinae</taxon>
        <taxon>Leishmania</taxon>
    </lineage>
</organism>
<name>BOP1_LEIIN</name>
<proteinExistence type="inferred from homology"/>
<protein>
    <recommendedName>
        <fullName evidence="1">Ribosome biogenesis protein BOP1 homolog</fullName>
    </recommendedName>
</protein>
<evidence type="ECO:0000255" key="1">
    <source>
        <dbReference type="HAMAP-Rule" id="MF_03027"/>
    </source>
</evidence>
<evidence type="ECO:0000256" key="2">
    <source>
        <dbReference type="SAM" id="MobiDB-lite"/>
    </source>
</evidence>
<sequence>MTSPKGKPSPKRSAPAPTTAALTPRTEERTEGATSSASASASSHISSSFDSPRDDTVVFTGYTAESKHNAHGYERLHDIILQDGDTGADSEDGRANEDNVILFPHAEELANAAAGINGDDDNGRVVRLGTIQHLEESDSSEDEPTLNRVGDIPLEWYKDEDHIGYDIEGKKLMKKERSALERLLEATDDPNAMRTIYDALHDEKKTLSNADLQLIFNLQRNRTTNPNYDMYSEVQEDTVVFDPLNHPLARSGGPSKRAFVPALHDMKVIAKMVRRLRKEEAERKLRPGKEEKEEEDQLLWDDGHVEMDTHTHFKYFNRVPKPKLPPPGTFESYRPPPEYLPSERAKQRQARLRAIDRKEHFLPQSFDALRHVPFYHHTIQDRYQRCLDLAFFPRAQRTRLVVDPDKLLPELPDPKDLRPYPEKLSFHYKGHTATVRSVSVSPNGQYLATGCDDHLVRVFEVQTGRLMKRYDMGAPVQQVEFCPSTSLNILAAAVEYSLVFIVPTFAAHTLVNDHTIRFLRAPGLSAGQREAAHALGAVDTLGGRAVTQTTLDADETAHEATADLHDIEEREKRAEFVDASAKERNAGIVVKIAMHAKVKKFCFHIKGDYLCALCPKDHVKYRQTIMLQLSKRKVFCPFRKFSEVVTDCRFHPREPIFFLATTNSVRCYNLMAHRLQRRFKASGGVTTCLSIHPEGDNFLVGDTTSHTSWFDMDFSDKPYKRMRSHRGVVNALAFHPKTNAYPLFATGASDGQVHVFHGMVYDDYNKNALVVPVKILKHQRPVYAVAWHPTLAWLFTSTEDGVVTAWTE</sequence>
<comment type="function">
    <text evidence="1">Required for maturation of ribosomal RNAs and formation of the large ribosomal subunit.</text>
</comment>
<comment type="subcellular location">
    <subcellularLocation>
        <location evidence="1">Nucleus</location>
        <location evidence="1">Nucleolus</location>
    </subcellularLocation>
    <subcellularLocation>
        <location evidence="1">Nucleus</location>
        <location evidence="1">Nucleoplasm</location>
    </subcellularLocation>
</comment>
<comment type="similarity">
    <text evidence="1">Belongs to the WD repeat BOP1/ERB1 family.</text>
</comment>
<accession>A4HUV2</accession>